<accession>Q3B6H8</accession>
<proteinExistence type="inferred from homology"/>
<gene>
    <name evidence="1" type="primary">gatB</name>
    <name type="ordered locus">Plut_0163</name>
</gene>
<evidence type="ECO:0000255" key="1">
    <source>
        <dbReference type="HAMAP-Rule" id="MF_00121"/>
    </source>
</evidence>
<comment type="function">
    <text evidence="1">Allows the formation of correctly charged Asn-tRNA(Asn) or Gln-tRNA(Gln) through the transamidation of misacylated Asp-tRNA(Asn) or Glu-tRNA(Gln) in organisms which lack either or both of asparaginyl-tRNA or glutaminyl-tRNA synthetases. The reaction takes place in the presence of glutamine and ATP through an activated phospho-Asp-tRNA(Asn) or phospho-Glu-tRNA(Gln).</text>
</comment>
<comment type="catalytic activity">
    <reaction evidence="1">
        <text>L-glutamyl-tRNA(Gln) + L-glutamine + ATP + H2O = L-glutaminyl-tRNA(Gln) + L-glutamate + ADP + phosphate + H(+)</text>
        <dbReference type="Rhea" id="RHEA:17521"/>
        <dbReference type="Rhea" id="RHEA-COMP:9681"/>
        <dbReference type="Rhea" id="RHEA-COMP:9684"/>
        <dbReference type="ChEBI" id="CHEBI:15377"/>
        <dbReference type="ChEBI" id="CHEBI:15378"/>
        <dbReference type="ChEBI" id="CHEBI:29985"/>
        <dbReference type="ChEBI" id="CHEBI:30616"/>
        <dbReference type="ChEBI" id="CHEBI:43474"/>
        <dbReference type="ChEBI" id="CHEBI:58359"/>
        <dbReference type="ChEBI" id="CHEBI:78520"/>
        <dbReference type="ChEBI" id="CHEBI:78521"/>
        <dbReference type="ChEBI" id="CHEBI:456216"/>
    </reaction>
</comment>
<comment type="catalytic activity">
    <reaction evidence="1">
        <text>L-aspartyl-tRNA(Asn) + L-glutamine + ATP + H2O = L-asparaginyl-tRNA(Asn) + L-glutamate + ADP + phosphate + 2 H(+)</text>
        <dbReference type="Rhea" id="RHEA:14513"/>
        <dbReference type="Rhea" id="RHEA-COMP:9674"/>
        <dbReference type="Rhea" id="RHEA-COMP:9677"/>
        <dbReference type="ChEBI" id="CHEBI:15377"/>
        <dbReference type="ChEBI" id="CHEBI:15378"/>
        <dbReference type="ChEBI" id="CHEBI:29985"/>
        <dbReference type="ChEBI" id="CHEBI:30616"/>
        <dbReference type="ChEBI" id="CHEBI:43474"/>
        <dbReference type="ChEBI" id="CHEBI:58359"/>
        <dbReference type="ChEBI" id="CHEBI:78515"/>
        <dbReference type="ChEBI" id="CHEBI:78516"/>
        <dbReference type="ChEBI" id="CHEBI:456216"/>
    </reaction>
</comment>
<comment type="subunit">
    <text evidence="1">Heterotrimer of A, B and C subunits.</text>
</comment>
<comment type="similarity">
    <text evidence="1">Belongs to the GatB/GatE family. GatB subfamily.</text>
</comment>
<sequence>MKYELVVGLEVHCQLNTASKAFCSCSAQFGKPANSNVCPVCLALPGALPVLNRRVVEDAVKLGLATGCAIAPHSVLARKNYFYPDLPKGYQISQFEEPICIEGHLMVDAGEGEKLIRLIRIHIEEDAGKSIHDIGDDTYIDVNRCGVPLLEIVSYPDIRTAKEASTYLQKLRQIVKYLGISDGNMEEGSLRCDANVSLRPVGDEEYGTRTEIKNMNSFKNVEKAIEFEAERHRGILEEGGTIVQETRLWDADKGETRSMRGKEFAHDYRYFPDPDLVPVLVDDEMLRRIRLELPEFPEARASRFVEQYGIPVYDAAVLTVEREMADYFEAVVEVAGDGKVSSNWVMGEVMRTLKEKYLDITAFSVAPSRLGGLIKLIGSGAISNTIAKQVFELMQQSEASAEEIVQREGLAQVSDTGEIERVVDEILAANPDQLAGYREGKVKLFGFFVGQCMARMKGKANPKVVNEVLQRKLEG</sequence>
<reference key="1">
    <citation type="submission" date="2005-08" db="EMBL/GenBank/DDBJ databases">
        <title>Complete sequence of Pelodictyon luteolum DSM 273.</title>
        <authorList>
            <consortium name="US DOE Joint Genome Institute"/>
            <person name="Copeland A."/>
            <person name="Lucas S."/>
            <person name="Lapidus A."/>
            <person name="Barry K."/>
            <person name="Detter J.C."/>
            <person name="Glavina T."/>
            <person name="Hammon N."/>
            <person name="Israni S."/>
            <person name="Pitluck S."/>
            <person name="Bryant D."/>
            <person name="Schmutz J."/>
            <person name="Larimer F."/>
            <person name="Land M."/>
            <person name="Kyrpides N."/>
            <person name="Ivanova N."/>
            <person name="Richardson P."/>
        </authorList>
    </citation>
    <scope>NUCLEOTIDE SEQUENCE [LARGE SCALE GENOMIC DNA]</scope>
    <source>
        <strain>DSM 273 / BCRC 81028 / 2530</strain>
    </source>
</reference>
<feature type="chain" id="PRO_0000241253" description="Aspartyl/glutamyl-tRNA(Asn/Gln) amidotransferase subunit B">
    <location>
        <begin position="1"/>
        <end position="475"/>
    </location>
</feature>
<protein>
    <recommendedName>
        <fullName evidence="1">Aspartyl/glutamyl-tRNA(Asn/Gln) amidotransferase subunit B</fullName>
        <shortName evidence="1">Asp/Glu-ADT subunit B</shortName>
        <ecNumber evidence="1">6.3.5.-</ecNumber>
    </recommendedName>
</protein>
<name>GATB_CHLL3</name>
<keyword id="KW-0067">ATP-binding</keyword>
<keyword id="KW-0436">Ligase</keyword>
<keyword id="KW-0547">Nucleotide-binding</keyword>
<keyword id="KW-0648">Protein biosynthesis</keyword>
<keyword id="KW-1185">Reference proteome</keyword>
<organism>
    <name type="scientific">Chlorobium luteolum (strain DSM 273 / BCRC 81028 / 2530)</name>
    <name type="common">Pelodictyon luteolum</name>
    <dbReference type="NCBI Taxonomy" id="319225"/>
    <lineage>
        <taxon>Bacteria</taxon>
        <taxon>Pseudomonadati</taxon>
        <taxon>Chlorobiota</taxon>
        <taxon>Chlorobiia</taxon>
        <taxon>Chlorobiales</taxon>
        <taxon>Chlorobiaceae</taxon>
        <taxon>Chlorobium/Pelodictyon group</taxon>
        <taxon>Pelodictyon</taxon>
    </lineage>
</organism>
<dbReference type="EC" id="6.3.5.-" evidence="1"/>
<dbReference type="EMBL" id="CP000096">
    <property type="protein sequence ID" value="ABB23053.1"/>
    <property type="molecule type" value="Genomic_DNA"/>
</dbReference>
<dbReference type="RefSeq" id="WP_011356929.1">
    <property type="nucleotide sequence ID" value="NC_007512.1"/>
</dbReference>
<dbReference type="SMR" id="Q3B6H8"/>
<dbReference type="STRING" id="319225.Plut_0163"/>
<dbReference type="KEGG" id="plt:Plut_0163"/>
<dbReference type="eggNOG" id="COG0064">
    <property type="taxonomic scope" value="Bacteria"/>
</dbReference>
<dbReference type="HOGENOM" id="CLU_019240_0_0_10"/>
<dbReference type="OrthoDB" id="9804078at2"/>
<dbReference type="Proteomes" id="UP000002709">
    <property type="component" value="Chromosome"/>
</dbReference>
<dbReference type="GO" id="GO:0050566">
    <property type="term" value="F:asparaginyl-tRNA synthase (glutamine-hydrolyzing) activity"/>
    <property type="evidence" value="ECO:0007669"/>
    <property type="project" value="RHEA"/>
</dbReference>
<dbReference type="GO" id="GO:0005524">
    <property type="term" value="F:ATP binding"/>
    <property type="evidence" value="ECO:0007669"/>
    <property type="project" value="UniProtKB-KW"/>
</dbReference>
<dbReference type="GO" id="GO:0050567">
    <property type="term" value="F:glutaminyl-tRNA synthase (glutamine-hydrolyzing) activity"/>
    <property type="evidence" value="ECO:0007669"/>
    <property type="project" value="UniProtKB-UniRule"/>
</dbReference>
<dbReference type="GO" id="GO:0070681">
    <property type="term" value="P:glutaminyl-tRNAGln biosynthesis via transamidation"/>
    <property type="evidence" value="ECO:0007669"/>
    <property type="project" value="TreeGrafter"/>
</dbReference>
<dbReference type="GO" id="GO:0006412">
    <property type="term" value="P:translation"/>
    <property type="evidence" value="ECO:0007669"/>
    <property type="project" value="UniProtKB-UniRule"/>
</dbReference>
<dbReference type="FunFam" id="1.10.10.410:FF:000001">
    <property type="entry name" value="Aspartyl/glutamyl-tRNA(Asn/Gln) amidotransferase subunit B"/>
    <property type="match status" value="1"/>
</dbReference>
<dbReference type="FunFam" id="1.10.150.380:FF:000001">
    <property type="entry name" value="Aspartyl/glutamyl-tRNA(Asn/Gln) amidotransferase subunit B"/>
    <property type="match status" value="1"/>
</dbReference>
<dbReference type="Gene3D" id="1.10.10.410">
    <property type="match status" value="1"/>
</dbReference>
<dbReference type="Gene3D" id="1.10.150.380">
    <property type="entry name" value="GatB domain, N-terminal subdomain"/>
    <property type="match status" value="1"/>
</dbReference>
<dbReference type="HAMAP" id="MF_00121">
    <property type="entry name" value="GatB"/>
    <property type="match status" value="1"/>
</dbReference>
<dbReference type="InterPro" id="IPR017959">
    <property type="entry name" value="Asn/Gln-tRNA_amidoTrfase_suB/E"/>
</dbReference>
<dbReference type="InterPro" id="IPR006075">
    <property type="entry name" value="Asn/Gln-tRNA_Trfase_suB/E_cat"/>
</dbReference>
<dbReference type="InterPro" id="IPR018027">
    <property type="entry name" value="Asn/Gln_amidotransferase"/>
</dbReference>
<dbReference type="InterPro" id="IPR003789">
    <property type="entry name" value="Asn/Gln_tRNA_amidoTrase-B-like"/>
</dbReference>
<dbReference type="InterPro" id="IPR004413">
    <property type="entry name" value="GatB"/>
</dbReference>
<dbReference type="InterPro" id="IPR042114">
    <property type="entry name" value="GatB_C_1"/>
</dbReference>
<dbReference type="InterPro" id="IPR023168">
    <property type="entry name" value="GatB_Yqey_C_2"/>
</dbReference>
<dbReference type="InterPro" id="IPR017958">
    <property type="entry name" value="Gln-tRNA_amidoTrfase_suB_CS"/>
</dbReference>
<dbReference type="InterPro" id="IPR014746">
    <property type="entry name" value="Gln_synth/guanido_kin_cat_dom"/>
</dbReference>
<dbReference type="NCBIfam" id="TIGR00133">
    <property type="entry name" value="gatB"/>
    <property type="match status" value="1"/>
</dbReference>
<dbReference type="NCBIfam" id="NF004012">
    <property type="entry name" value="PRK05477.1-2"/>
    <property type="match status" value="1"/>
</dbReference>
<dbReference type="NCBIfam" id="NF004014">
    <property type="entry name" value="PRK05477.1-4"/>
    <property type="match status" value="1"/>
</dbReference>
<dbReference type="NCBIfam" id="NF004015">
    <property type="entry name" value="PRK05477.1-5"/>
    <property type="match status" value="1"/>
</dbReference>
<dbReference type="PANTHER" id="PTHR11659">
    <property type="entry name" value="GLUTAMYL-TRNA GLN AMIDOTRANSFERASE SUBUNIT B MITOCHONDRIAL AND PROKARYOTIC PET112-RELATED"/>
    <property type="match status" value="1"/>
</dbReference>
<dbReference type="PANTHER" id="PTHR11659:SF0">
    <property type="entry name" value="GLUTAMYL-TRNA(GLN) AMIDOTRANSFERASE SUBUNIT B, MITOCHONDRIAL"/>
    <property type="match status" value="1"/>
</dbReference>
<dbReference type="Pfam" id="PF02934">
    <property type="entry name" value="GatB_N"/>
    <property type="match status" value="1"/>
</dbReference>
<dbReference type="Pfam" id="PF02637">
    <property type="entry name" value="GatB_Yqey"/>
    <property type="match status" value="1"/>
</dbReference>
<dbReference type="SMART" id="SM00845">
    <property type="entry name" value="GatB_Yqey"/>
    <property type="match status" value="1"/>
</dbReference>
<dbReference type="SUPFAM" id="SSF89095">
    <property type="entry name" value="GatB/YqeY motif"/>
    <property type="match status" value="1"/>
</dbReference>
<dbReference type="SUPFAM" id="SSF55931">
    <property type="entry name" value="Glutamine synthetase/guanido kinase"/>
    <property type="match status" value="1"/>
</dbReference>
<dbReference type="PROSITE" id="PS01234">
    <property type="entry name" value="GATB"/>
    <property type="match status" value="1"/>
</dbReference>